<keyword id="KW-0233">DNA recombination</keyword>
<keyword id="KW-0238">DNA-binding</keyword>
<keyword id="KW-1185">Reference proteome</keyword>
<keyword id="KW-0804">Transcription</keyword>
<keyword id="KW-0805">Transcription regulation</keyword>
<keyword id="KW-0810">Translation regulation</keyword>
<feature type="chain" id="PRO_0000277787" description="Integration host factor subunit alpha">
    <location>
        <begin position="1"/>
        <end position="98"/>
    </location>
</feature>
<feature type="region of interest" description="Disordered" evidence="2">
    <location>
        <begin position="53"/>
        <end position="73"/>
    </location>
</feature>
<feature type="compositionally biased region" description="Basic and acidic residues" evidence="2">
    <location>
        <begin position="53"/>
        <end position="69"/>
    </location>
</feature>
<dbReference type="EMBL" id="CP000020">
    <property type="protein sequence ID" value="AAW85732.1"/>
    <property type="molecule type" value="Genomic_DNA"/>
</dbReference>
<dbReference type="RefSeq" id="WP_005419121.1">
    <property type="nucleotide sequence ID" value="NZ_CAWLES010000001.1"/>
</dbReference>
<dbReference type="RefSeq" id="YP_204620.1">
    <property type="nucleotide sequence ID" value="NC_006840.2"/>
</dbReference>
<dbReference type="SMR" id="Q5E5G4"/>
<dbReference type="STRING" id="312309.VF_1237"/>
<dbReference type="EnsemblBacteria" id="AAW85732">
    <property type="protein sequence ID" value="AAW85732"/>
    <property type="gene ID" value="VF_1237"/>
</dbReference>
<dbReference type="GeneID" id="56276981"/>
<dbReference type="KEGG" id="vfi:VF_1237"/>
<dbReference type="PATRIC" id="fig|312309.11.peg.1244"/>
<dbReference type="eggNOG" id="COG0776">
    <property type="taxonomic scope" value="Bacteria"/>
</dbReference>
<dbReference type="HOGENOM" id="CLU_105066_1_3_6"/>
<dbReference type="OrthoDB" id="9797747at2"/>
<dbReference type="Proteomes" id="UP000000537">
    <property type="component" value="Chromosome I"/>
</dbReference>
<dbReference type="GO" id="GO:0005829">
    <property type="term" value="C:cytosol"/>
    <property type="evidence" value="ECO:0007669"/>
    <property type="project" value="TreeGrafter"/>
</dbReference>
<dbReference type="GO" id="GO:0003677">
    <property type="term" value="F:DNA binding"/>
    <property type="evidence" value="ECO:0007669"/>
    <property type="project" value="UniProtKB-UniRule"/>
</dbReference>
<dbReference type="GO" id="GO:0030527">
    <property type="term" value="F:structural constituent of chromatin"/>
    <property type="evidence" value="ECO:0007669"/>
    <property type="project" value="InterPro"/>
</dbReference>
<dbReference type="GO" id="GO:0006310">
    <property type="term" value="P:DNA recombination"/>
    <property type="evidence" value="ECO:0007669"/>
    <property type="project" value="UniProtKB-UniRule"/>
</dbReference>
<dbReference type="GO" id="GO:0009893">
    <property type="term" value="P:positive regulation of metabolic process"/>
    <property type="evidence" value="ECO:0007669"/>
    <property type="project" value="UniProtKB-ARBA"/>
</dbReference>
<dbReference type="GO" id="GO:0006355">
    <property type="term" value="P:regulation of DNA-templated transcription"/>
    <property type="evidence" value="ECO:0007669"/>
    <property type="project" value="UniProtKB-UniRule"/>
</dbReference>
<dbReference type="GO" id="GO:0006417">
    <property type="term" value="P:regulation of translation"/>
    <property type="evidence" value="ECO:0007669"/>
    <property type="project" value="UniProtKB-UniRule"/>
</dbReference>
<dbReference type="CDD" id="cd13835">
    <property type="entry name" value="IHF_A"/>
    <property type="match status" value="1"/>
</dbReference>
<dbReference type="FunFam" id="4.10.520.10:FF:000002">
    <property type="entry name" value="Integration host factor subunit alpha"/>
    <property type="match status" value="1"/>
</dbReference>
<dbReference type="Gene3D" id="4.10.520.10">
    <property type="entry name" value="IHF-like DNA-binding proteins"/>
    <property type="match status" value="1"/>
</dbReference>
<dbReference type="HAMAP" id="MF_00380">
    <property type="entry name" value="IHF_alpha"/>
    <property type="match status" value="1"/>
</dbReference>
<dbReference type="InterPro" id="IPR000119">
    <property type="entry name" value="Hist_DNA-bd"/>
</dbReference>
<dbReference type="InterPro" id="IPR020816">
    <property type="entry name" value="Histone-like_DNA-bd_CS"/>
</dbReference>
<dbReference type="InterPro" id="IPR010992">
    <property type="entry name" value="IHF-like_DNA-bd_dom_sf"/>
</dbReference>
<dbReference type="InterPro" id="IPR005684">
    <property type="entry name" value="IHF_alpha"/>
</dbReference>
<dbReference type="NCBIfam" id="TIGR00987">
    <property type="entry name" value="himA"/>
    <property type="match status" value="1"/>
</dbReference>
<dbReference type="NCBIfam" id="NF001401">
    <property type="entry name" value="PRK00285.1"/>
    <property type="match status" value="1"/>
</dbReference>
<dbReference type="PANTHER" id="PTHR33175">
    <property type="entry name" value="DNA-BINDING PROTEIN HU"/>
    <property type="match status" value="1"/>
</dbReference>
<dbReference type="PANTHER" id="PTHR33175:SF2">
    <property type="entry name" value="INTEGRATION HOST FACTOR SUBUNIT ALPHA"/>
    <property type="match status" value="1"/>
</dbReference>
<dbReference type="Pfam" id="PF00216">
    <property type="entry name" value="Bac_DNA_binding"/>
    <property type="match status" value="1"/>
</dbReference>
<dbReference type="PRINTS" id="PR01727">
    <property type="entry name" value="DNABINDINGHU"/>
</dbReference>
<dbReference type="SMART" id="SM00411">
    <property type="entry name" value="BHL"/>
    <property type="match status" value="1"/>
</dbReference>
<dbReference type="SUPFAM" id="SSF47729">
    <property type="entry name" value="IHF-like DNA-binding proteins"/>
    <property type="match status" value="1"/>
</dbReference>
<dbReference type="PROSITE" id="PS00045">
    <property type="entry name" value="HISTONE_LIKE"/>
    <property type="match status" value="1"/>
</dbReference>
<protein>
    <recommendedName>
        <fullName evidence="1">Integration host factor subunit alpha</fullName>
        <shortName evidence="1">IHF-alpha</shortName>
    </recommendedName>
</protein>
<evidence type="ECO:0000255" key="1">
    <source>
        <dbReference type="HAMAP-Rule" id="MF_00380"/>
    </source>
</evidence>
<evidence type="ECO:0000256" key="2">
    <source>
        <dbReference type="SAM" id="MobiDB-lite"/>
    </source>
</evidence>
<reference key="1">
    <citation type="journal article" date="2005" name="Proc. Natl. Acad. Sci. U.S.A.">
        <title>Complete genome sequence of Vibrio fischeri: a symbiotic bacterium with pathogenic congeners.</title>
        <authorList>
            <person name="Ruby E.G."/>
            <person name="Urbanowski M."/>
            <person name="Campbell J."/>
            <person name="Dunn A."/>
            <person name="Faini M."/>
            <person name="Gunsalus R."/>
            <person name="Lostroh P."/>
            <person name="Lupp C."/>
            <person name="McCann J."/>
            <person name="Millikan D."/>
            <person name="Schaefer A."/>
            <person name="Stabb E."/>
            <person name="Stevens A."/>
            <person name="Visick K."/>
            <person name="Whistler C."/>
            <person name="Greenberg E.P."/>
        </authorList>
    </citation>
    <scope>NUCLEOTIDE SEQUENCE [LARGE SCALE GENOMIC DNA]</scope>
    <source>
        <strain>ATCC 700601 / ES114</strain>
    </source>
</reference>
<comment type="function">
    <text evidence="1">This protein is one of the two subunits of integration host factor, a specific DNA-binding protein that functions in genetic recombination as well as in transcriptional and translational control.</text>
</comment>
<comment type="subunit">
    <text evidence="1">Heterodimer of an alpha and a beta chain.</text>
</comment>
<comment type="similarity">
    <text evidence="1">Belongs to the bacterial histone-like protein family.</text>
</comment>
<name>IHFA_ALIF1</name>
<proteinExistence type="inferred from homology"/>
<accession>Q5E5G4</accession>
<organism>
    <name type="scientific">Aliivibrio fischeri (strain ATCC 700601 / ES114)</name>
    <name type="common">Vibrio fischeri</name>
    <dbReference type="NCBI Taxonomy" id="312309"/>
    <lineage>
        <taxon>Bacteria</taxon>
        <taxon>Pseudomonadati</taxon>
        <taxon>Pseudomonadota</taxon>
        <taxon>Gammaproteobacteria</taxon>
        <taxon>Vibrionales</taxon>
        <taxon>Vibrionaceae</taxon>
        <taxon>Aliivibrio</taxon>
    </lineage>
</organism>
<sequence>MALTKADLAETLFEKVGLSKRDAKETVEVFFEEIKQALESGEQVKLSGFGNFDLREKSERPGRNPKTGEDIPISARRVVTFKPGQKLKARVENLPVEK</sequence>
<gene>
    <name evidence="1" type="primary">ihfA</name>
    <name evidence="1" type="synonym">himA</name>
    <name type="ordered locus">VF_1237</name>
</gene>